<reference key="1">
    <citation type="journal article" date="2000" name="J. Mammal.">
        <title>Molecular systematics of a holarctic rodent (Microtus, Muridae).</title>
        <authorList>
            <person name="Conroy C.J."/>
            <person name="Cook J.A."/>
        </authorList>
    </citation>
    <scope>NUCLEOTIDE SEQUENCE [GENOMIC DNA]</scope>
</reference>
<proteinExistence type="inferred from homology"/>
<gene>
    <name type="primary">MT-CYB</name>
    <name type="synonym">COB</name>
    <name type="synonym">CYTB</name>
    <name type="synonym">MTCYB</name>
</gene>
<comment type="function">
    <text evidence="2">Component of the ubiquinol-cytochrome c reductase complex (complex III or cytochrome b-c1 complex) that is part of the mitochondrial respiratory chain. The b-c1 complex mediates electron transfer from ubiquinol to cytochrome c. Contributes to the generation of a proton gradient across the mitochondrial membrane that is then used for ATP synthesis.</text>
</comment>
<comment type="cofactor">
    <cofactor evidence="2">
        <name>heme b</name>
        <dbReference type="ChEBI" id="CHEBI:60344"/>
    </cofactor>
    <text evidence="2">Binds 2 heme b groups non-covalently.</text>
</comment>
<comment type="subunit">
    <text evidence="2">The cytochrome bc1 complex contains 11 subunits: 3 respiratory subunits (MT-CYB, CYC1 and UQCRFS1), 2 core proteins (UQCRC1 and UQCRC2) and 6 low-molecular weight proteins (UQCRH/QCR6, UQCRB/QCR7, UQCRQ/QCR8, UQCR10/QCR9, UQCR11/QCR10 and a cleavage product of UQCRFS1). This cytochrome bc1 complex then forms a dimer.</text>
</comment>
<comment type="subcellular location">
    <subcellularLocation>
        <location evidence="2">Mitochondrion inner membrane</location>
        <topology evidence="2">Multi-pass membrane protein</topology>
    </subcellularLocation>
</comment>
<comment type="miscellaneous">
    <text evidence="1">Heme 1 (or BL or b562) is low-potential and absorbs at about 562 nm, and heme 2 (or BH or b566) is high-potential and absorbs at about 566 nm.</text>
</comment>
<comment type="similarity">
    <text evidence="3 4">Belongs to the cytochrome b family.</text>
</comment>
<comment type="caution">
    <text evidence="2">The full-length protein contains only eight transmembrane helices, not nine as predicted by bioinformatics tools.</text>
</comment>
<name>CYB_MICCT</name>
<accession>Q9MI36</accession>
<geneLocation type="mitochondrion"/>
<organism>
    <name type="scientific">Microtus chrotorrhinus</name>
    <name type="common">Rock vole</name>
    <dbReference type="NCBI Taxonomy" id="10055"/>
    <lineage>
        <taxon>Eukaryota</taxon>
        <taxon>Metazoa</taxon>
        <taxon>Chordata</taxon>
        <taxon>Craniata</taxon>
        <taxon>Vertebrata</taxon>
        <taxon>Euteleostomi</taxon>
        <taxon>Mammalia</taxon>
        <taxon>Eutheria</taxon>
        <taxon>Euarchontoglires</taxon>
        <taxon>Glires</taxon>
        <taxon>Rodentia</taxon>
        <taxon>Myomorpha</taxon>
        <taxon>Muroidea</taxon>
        <taxon>Cricetidae</taxon>
        <taxon>Arvicolinae</taxon>
        <taxon>Microtus</taxon>
    </lineage>
</organism>
<dbReference type="EMBL" id="AF163893">
    <property type="protein sequence ID" value="AAF97417.1"/>
    <property type="molecule type" value="Genomic_DNA"/>
</dbReference>
<dbReference type="SMR" id="Q9MI36"/>
<dbReference type="GO" id="GO:0005743">
    <property type="term" value="C:mitochondrial inner membrane"/>
    <property type="evidence" value="ECO:0007669"/>
    <property type="project" value="UniProtKB-SubCell"/>
</dbReference>
<dbReference type="GO" id="GO:0045275">
    <property type="term" value="C:respiratory chain complex III"/>
    <property type="evidence" value="ECO:0007669"/>
    <property type="project" value="InterPro"/>
</dbReference>
<dbReference type="GO" id="GO:0046872">
    <property type="term" value="F:metal ion binding"/>
    <property type="evidence" value="ECO:0007669"/>
    <property type="project" value="UniProtKB-KW"/>
</dbReference>
<dbReference type="GO" id="GO:0008121">
    <property type="term" value="F:ubiquinol-cytochrome-c reductase activity"/>
    <property type="evidence" value="ECO:0007669"/>
    <property type="project" value="InterPro"/>
</dbReference>
<dbReference type="GO" id="GO:0006122">
    <property type="term" value="P:mitochondrial electron transport, ubiquinol to cytochrome c"/>
    <property type="evidence" value="ECO:0007669"/>
    <property type="project" value="TreeGrafter"/>
</dbReference>
<dbReference type="CDD" id="cd00290">
    <property type="entry name" value="cytochrome_b_C"/>
    <property type="match status" value="1"/>
</dbReference>
<dbReference type="CDD" id="cd00284">
    <property type="entry name" value="Cytochrome_b_N"/>
    <property type="match status" value="1"/>
</dbReference>
<dbReference type="FunFam" id="1.20.810.10:FF:000002">
    <property type="entry name" value="Cytochrome b"/>
    <property type="match status" value="1"/>
</dbReference>
<dbReference type="Gene3D" id="1.20.810.10">
    <property type="entry name" value="Cytochrome Bc1 Complex, Chain C"/>
    <property type="match status" value="1"/>
</dbReference>
<dbReference type="InterPro" id="IPR005798">
    <property type="entry name" value="Cyt_b/b6_C"/>
</dbReference>
<dbReference type="InterPro" id="IPR036150">
    <property type="entry name" value="Cyt_b/b6_C_sf"/>
</dbReference>
<dbReference type="InterPro" id="IPR005797">
    <property type="entry name" value="Cyt_b/b6_N"/>
</dbReference>
<dbReference type="InterPro" id="IPR027387">
    <property type="entry name" value="Cytb/b6-like_sf"/>
</dbReference>
<dbReference type="InterPro" id="IPR030689">
    <property type="entry name" value="Cytochrome_b"/>
</dbReference>
<dbReference type="InterPro" id="IPR048260">
    <property type="entry name" value="Cytochrome_b_C_euk/bac"/>
</dbReference>
<dbReference type="InterPro" id="IPR048259">
    <property type="entry name" value="Cytochrome_b_N_euk/bac"/>
</dbReference>
<dbReference type="InterPro" id="IPR016174">
    <property type="entry name" value="Di-haem_cyt_TM"/>
</dbReference>
<dbReference type="PANTHER" id="PTHR19271">
    <property type="entry name" value="CYTOCHROME B"/>
    <property type="match status" value="1"/>
</dbReference>
<dbReference type="PANTHER" id="PTHR19271:SF16">
    <property type="entry name" value="CYTOCHROME B"/>
    <property type="match status" value="1"/>
</dbReference>
<dbReference type="Pfam" id="PF00032">
    <property type="entry name" value="Cytochrom_B_C"/>
    <property type="match status" value="1"/>
</dbReference>
<dbReference type="Pfam" id="PF00033">
    <property type="entry name" value="Cytochrome_B"/>
    <property type="match status" value="1"/>
</dbReference>
<dbReference type="PIRSF" id="PIRSF038885">
    <property type="entry name" value="COB"/>
    <property type="match status" value="1"/>
</dbReference>
<dbReference type="SUPFAM" id="SSF81648">
    <property type="entry name" value="a domain/subunit of cytochrome bc1 complex (Ubiquinol-cytochrome c reductase)"/>
    <property type="match status" value="1"/>
</dbReference>
<dbReference type="SUPFAM" id="SSF81342">
    <property type="entry name" value="Transmembrane di-heme cytochromes"/>
    <property type="match status" value="1"/>
</dbReference>
<dbReference type="PROSITE" id="PS51003">
    <property type="entry name" value="CYTB_CTER"/>
    <property type="match status" value="1"/>
</dbReference>
<dbReference type="PROSITE" id="PS51002">
    <property type="entry name" value="CYTB_NTER"/>
    <property type="match status" value="1"/>
</dbReference>
<protein>
    <recommendedName>
        <fullName>Cytochrome b</fullName>
    </recommendedName>
    <alternativeName>
        <fullName>Complex III subunit 3</fullName>
    </alternativeName>
    <alternativeName>
        <fullName>Complex III subunit III</fullName>
    </alternativeName>
    <alternativeName>
        <fullName>Cytochrome b-c1 complex subunit 3</fullName>
    </alternativeName>
    <alternativeName>
        <fullName>Ubiquinol-cytochrome-c reductase complex cytochrome b subunit</fullName>
    </alternativeName>
</protein>
<evidence type="ECO:0000250" key="1"/>
<evidence type="ECO:0000250" key="2">
    <source>
        <dbReference type="UniProtKB" id="P00157"/>
    </source>
</evidence>
<evidence type="ECO:0000255" key="3">
    <source>
        <dbReference type="PROSITE-ProRule" id="PRU00967"/>
    </source>
</evidence>
<evidence type="ECO:0000255" key="4">
    <source>
        <dbReference type="PROSITE-ProRule" id="PRU00968"/>
    </source>
</evidence>
<sequence length="380" mass="42924">MTIIRKKHPLIKIINHSFIDLPTPSNISSWWNFGSLLGLCLIIQILTGLFLAMHYTSDTATAFSSVAHICRDVNYGWLIRYMHANGASMFFICLFLHVGRGIYYGSYNMIETWNMGIILLFAVMATAFMGYVLPWGQMSFWGATVITNLLSAIPYIGTTLVEWIWGGFSVDKATLTRFFAFHFILPFIITALVLVHLLFLHETGSNNPTGLNSDADKIPFHPYYTIKDFLGVLILLMAFMILTLFFPDILGDPDNYTPANPLNTPPHIKPEWYFLFAYAILRSIPNKLGGVLALILSILILALMPFLHTSKQRTLTFRPITQTMYWILVADLLILTWVGGQPVEHPFIIIGQTASIAYFTIIVILMPMAGMIENNILDLD</sequence>
<keyword id="KW-0249">Electron transport</keyword>
<keyword id="KW-0349">Heme</keyword>
<keyword id="KW-0408">Iron</keyword>
<keyword id="KW-0472">Membrane</keyword>
<keyword id="KW-0479">Metal-binding</keyword>
<keyword id="KW-0496">Mitochondrion</keyword>
<keyword id="KW-0999">Mitochondrion inner membrane</keyword>
<keyword id="KW-0679">Respiratory chain</keyword>
<keyword id="KW-0812">Transmembrane</keyword>
<keyword id="KW-1133">Transmembrane helix</keyword>
<keyword id="KW-0813">Transport</keyword>
<keyword id="KW-0830">Ubiquinone</keyword>
<feature type="chain" id="PRO_0000257916" description="Cytochrome b">
    <location>
        <begin position="1"/>
        <end position="380"/>
    </location>
</feature>
<feature type="transmembrane region" description="Helical" evidence="2">
    <location>
        <begin position="33"/>
        <end position="53"/>
    </location>
</feature>
<feature type="transmembrane region" description="Helical" evidence="2">
    <location>
        <begin position="77"/>
        <end position="98"/>
    </location>
</feature>
<feature type="transmembrane region" description="Helical" evidence="2">
    <location>
        <begin position="113"/>
        <end position="133"/>
    </location>
</feature>
<feature type="transmembrane region" description="Helical" evidence="2">
    <location>
        <begin position="178"/>
        <end position="198"/>
    </location>
</feature>
<feature type="transmembrane region" description="Helical" evidence="2">
    <location>
        <begin position="226"/>
        <end position="246"/>
    </location>
</feature>
<feature type="transmembrane region" description="Helical" evidence="2">
    <location>
        <begin position="288"/>
        <end position="308"/>
    </location>
</feature>
<feature type="transmembrane region" description="Helical" evidence="2">
    <location>
        <begin position="320"/>
        <end position="340"/>
    </location>
</feature>
<feature type="transmembrane region" description="Helical" evidence="2">
    <location>
        <begin position="347"/>
        <end position="367"/>
    </location>
</feature>
<feature type="binding site" description="axial binding residue" evidence="2">
    <location>
        <position position="83"/>
    </location>
    <ligand>
        <name>heme b</name>
        <dbReference type="ChEBI" id="CHEBI:60344"/>
        <label>b562</label>
    </ligand>
    <ligandPart>
        <name>Fe</name>
        <dbReference type="ChEBI" id="CHEBI:18248"/>
    </ligandPart>
</feature>
<feature type="binding site" description="axial binding residue" evidence="2">
    <location>
        <position position="97"/>
    </location>
    <ligand>
        <name>heme b</name>
        <dbReference type="ChEBI" id="CHEBI:60344"/>
        <label>b566</label>
    </ligand>
    <ligandPart>
        <name>Fe</name>
        <dbReference type="ChEBI" id="CHEBI:18248"/>
    </ligandPart>
</feature>
<feature type="binding site" description="axial binding residue" evidence="2">
    <location>
        <position position="182"/>
    </location>
    <ligand>
        <name>heme b</name>
        <dbReference type="ChEBI" id="CHEBI:60344"/>
        <label>b562</label>
    </ligand>
    <ligandPart>
        <name>Fe</name>
        <dbReference type="ChEBI" id="CHEBI:18248"/>
    </ligandPart>
</feature>
<feature type="binding site" description="axial binding residue" evidence="2">
    <location>
        <position position="196"/>
    </location>
    <ligand>
        <name>heme b</name>
        <dbReference type="ChEBI" id="CHEBI:60344"/>
        <label>b566</label>
    </ligand>
    <ligandPart>
        <name>Fe</name>
        <dbReference type="ChEBI" id="CHEBI:18248"/>
    </ligandPart>
</feature>
<feature type="binding site" evidence="2">
    <location>
        <position position="201"/>
    </location>
    <ligand>
        <name>a ubiquinone</name>
        <dbReference type="ChEBI" id="CHEBI:16389"/>
    </ligand>
</feature>